<dbReference type="EC" id="1.7.1.7" evidence="1"/>
<dbReference type="EMBL" id="AM295250">
    <property type="protein sequence ID" value="CAL27886.1"/>
    <property type="molecule type" value="Genomic_DNA"/>
</dbReference>
<dbReference type="RefSeq" id="WP_015900227.1">
    <property type="nucleotide sequence ID" value="NC_012121.1"/>
</dbReference>
<dbReference type="SMR" id="B9DP67"/>
<dbReference type="GeneID" id="93793405"/>
<dbReference type="KEGG" id="sca:SCA_0978"/>
<dbReference type="eggNOG" id="COG0516">
    <property type="taxonomic scope" value="Bacteria"/>
</dbReference>
<dbReference type="HOGENOM" id="CLU_022552_5_0_9"/>
<dbReference type="OrthoDB" id="9805398at2"/>
<dbReference type="BioCyc" id="SCAR396513:SCA_RS04915-MONOMER"/>
<dbReference type="Proteomes" id="UP000000444">
    <property type="component" value="Chromosome"/>
</dbReference>
<dbReference type="GO" id="GO:0005829">
    <property type="term" value="C:cytosol"/>
    <property type="evidence" value="ECO:0007669"/>
    <property type="project" value="TreeGrafter"/>
</dbReference>
<dbReference type="GO" id="GO:1902560">
    <property type="term" value="C:GMP reductase complex"/>
    <property type="evidence" value="ECO:0007669"/>
    <property type="project" value="InterPro"/>
</dbReference>
<dbReference type="GO" id="GO:0003920">
    <property type="term" value="F:GMP reductase activity"/>
    <property type="evidence" value="ECO:0007669"/>
    <property type="project" value="UniProtKB-UniRule"/>
</dbReference>
<dbReference type="GO" id="GO:0006163">
    <property type="term" value="P:purine nucleotide metabolic process"/>
    <property type="evidence" value="ECO:0007669"/>
    <property type="project" value="UniProtKB-UniRule"/>
</dbReference>
<dbReference type="CDD" id="cd00381">
    <property type="entry name" value="IMPDH"/>
    <property type="match status" value="1"/>
</dbReference>
<dbReference type="FunFam" id="3.20.20.70:FF:000079">
    <property type="entry name" value="GMP reductase"/>
    <property type="match status" value="1"/>
</dbReference>
<dbReference type="Gene3D" id="3.20.20.70">
    <property type="entry name" value="Aldolase class I"/>
    <property type="match status" value="1"/>
</dbReference>
<dbReference type="HAMAP" id="MF_01511">
    <property type="entry name" value="GMP_reduct_type2"/>
    <property type="match status" value="1"/>
</dbReference>
<dbReference type="InterPro" id="IPR013785">
    <property type="entry name" value="Aldolase_TIM"/>
</dbReference>
<dbReference type="InterPro" id="IPR050139">
    <property type="entry name" value="GMP_reductase"/>
</dbReference>
<dbReference type="InterPro" id="IPR005994">
    <property type="entry name" value="GuaC_type_2"/>
</dbReference>
<dbReference type="InterPro" id="IPR015875">
    <property type="entry name" value="IMP_DH/GMP_Rdtase_CS"/>
</dbReference>
<dbReference type="InterPro" id="IPR001093">
    <property type="entry name" value="IMP_DH_GMPRt"/>
</dbReference>
<dbReference type="NCBIfam" id="TIGR01306">
    <property type="entry name" value="GMP_reduct_2"/>
    <property type="match status" value="1"/>
</dbReference>
<dbReference type="NCBIfam" id="NF003966">
    <property type="entry name" value="PRK05458.1"/>
    <property type="match status" value="1"/>
</dbReference>
<dbReference type="PANTHER" id="PTHR43170">
    <property type="entry name" value="GMP REDUCTASE"/>
    <property type="match status" value="1"/>
</dbReference>
<dbReference type="PANTHER" id="PTHR43170:SF5">
    <property type="entry name" value="GMP REDUCTASE"/>
    <property type="match status" value="1"/>
</dbReference>
<dbReference type="Pfam" id="PF00478">
    <property type="entry name" value="IMPDH"/>
    <property type="match status" value="1"/>
</dbReference>
<dbReference type="PIRSF" id="PIRSF036500">
    <property type="entry name" value="GMP_red_Firmic"/>
    <property type="match status" value="1"/>
</dbReference>
<dbReference type="SMART" id="SM01240">
    <property type="entry name" value="IMPDH"/>
    <property type="match status" value="1"/>
</dbReference>
<dbReference type="SUPFAM" id="SSF51412">
    <property type="entry name" value="Inosine monophosphate dehydrogenase (IMPDH)"/>
    <property type="match status" value="1"/>
</dbReference>
<dbReference type="PROSITE" id="PS00487">
    <property type="entry name" value="IMP_DH_GMP_RED"/>
    <property type="match status" value="1"/>
</dbReference>
<reference key="1">
    <citation type="journal article" date="2009" name="Appl. Environ. Microbiol.">
        <title>Genome analysis of the meat starter culture bacterium Staphylococcus carnosus TM300.</title>
        <authorList>
            <person name="Rosenstein R."/>
            <person name="Nerz C."/>
            <person name="Biswas L."/>
            <person name="Resch A."/>
            <person name="Raddatz G."/>
            <person name="Schuster S.C."/>
            <person name="Goetz F."/>
        </authorList>
    </citation>
    <scope>NUCLEOTIDE SEQUENCE [LARGE SCALE GENOMIC DNA]</scope>
    <source>
        <strain>TM300</strain>
    </source>
</reference>
<gene>
    <name evidence="1" type="primary">guaC</name>
    <name type="ordered locus">Sca_0978</name>
</gene>
<keyword id="KW-0521">NADP</keyword>
<keyword id="KW-0560">Oxidoreductase</keyword>
<keyword id="KW-1185">Reference proteome</keyword>
<name>GUAC_STACT</name>
<sequence length="325" mass="36208">MKIFDYEDVQLIPNKCIVKSRSECDTSVQFGPKRFKLPVVPANMQTVMNEKLAEWFAENDYFYIMHRFDEEGRIPFIKKMQDKGLFASISVGVKDKEYDFVRELAEEGLKPEYITIDIAHGHSEQVINMIRQIKSYLPETFVIAGNVGTPEGVRELENAGADATKVGIGPGRVCITKIKTGFGTGGWQLAAINHCSKAARKPMIADGGIRTHGDIAKSIRFGASMVMVGSLFAAHEESPGETVELDGKLYKEYFGSASEFQKGEHKNVEGKKMFVEHKGTLADTLTEMQQDLQSSISYAGGKDLDSLRKVDYVIVRNSIFNGDRD</sequence>
<evidence type="ECO:0000255" key="1">
    <source>
        <dbReference type="HAMAP-Rule" id="MF_01511"/>
    </source>
</evidence>
<protein>
    <recommendedName>
        <fullName evidence="1">GMP reductase</fullName>
        <ecNumber evidence="1">1.7.1.7</ecNumber>
    </recommendedName>
    <alternativeName>
        <fullName evidence="1">Guanosine 5'-monophosphate oxidoreductase</fullName>
        <shortName evidence="1">Guanosine monophosphate reductase</shortName>
    </alternativeName>
</protein>
<accession>B9DP67</accession>
<feature type="chain" id="PRO_1000185054" description="GMP reductase">
    <location>
        <begin position="1"/>
        <end position="325"/>
    </location>
</feature>
<feature type="active site" description="Thioimidate intermediate" evidence="1">
    <location>
        <position position="174"/>
    </location>
</feature>
<feature type="binding site" evidence="1">
    <location>
        <begin position="203"/>
        <end position="226"/>
    </location>
    <ligand>
        <name>NADP(+)</name>
        <dbReference type="ChEBI" id="CHEBI:58349"/>
    </ligand>
</feature>
<comment type="function">
    <text evidence="1">Catalyzes the irreversible NADPH-dependent deamination of GMP to IMP. It functions in the conversion of nucleobase, nucleoside and nucleotide derivatives of G to A nucleotides, and in maintaining the intracellular balance of A and G nucleotides.</text>
</comment>
<comment type="catalytic activity">
    <reaction evidence="1">
        <text>IMP + NH4(+) + NADP(+) = GMP + NADPH + 2 H(+)</text>
        <dbReference type="Rhea" id="RHEA:17185"/>
        <dbReference type="ChEBI" id="CHEBI:15378"/>
        <dbReference type="ChEBI" id="CHEBI:28938"/>
        <dbReference type="ChEBI" id="CHEBI:57783"/>
        <dbReference type="ChEBI" id="CHEBI:58053"/>
        <dbReference type="ChEBI" id="CHEBI:58115"/>
        <dbReference type="ChEBI" id="CHEBI:58349"/>
        <dbReference type="EC" id="1.7.1.7"/>
    </reaction>
</comment>
<comment type="similarity">
    <text evidence="1">Belongs to the IMPDH/GMPR family. GuaC type 2 subfamily.</text>
</comment>
<organism>
    <name type="scientific">Staphylococcus carnosus (strain TM300)</name>
    <dbReference type="NCBI Taxonomy" id="396513"/>
    <lineage>
        <taxon>Bacteria</taxon>
        <taxon>Bacillati</taxon>
        <taxon>Bacillota</taxon>
        <taxon>Bacilli</taxon>
        <taxon>Bacillales</taxon>
        <taxon>Staphylococcaceae</taxon>
        <taxon>Staphylococcus</taxon>
    </lineage>
</organism>
<proteinExistence type="inferred from homology"/>